<name>MDTC_PROMH</name>
<sequence>MKLFALFIQRPVATTLLSLAISLCGALGFMLLPVAPLPQVDYPVINIYASLPGASPETMASSVATPLERSLGRIAGIDEMTSSSALGSTSITLVFDLNKDINTAARDVQAALNASQSLLPSGMPSRPRYYKSNPSDAPIMILTLTSETQNTGELYDLASTRLAQKISQIEGVSEVSVGGGSLPAVRVALNPDALFNQNVSLDDVRKAISQSNVRRPQGFIHNDENRWQIQTNDELSKAQDYRPIIVHYNQDAIVRLSDVAQVTDSVQNARAAGMSGGEPAILLVIRREAGANIIETVNRIRDELPELRELLPASVNLKVAQDRTPTIRASLAEVERALAIAVALVILVVFLFLRSGRATLIPAVAVPVSLIGTFSAMYLCGFSLNNLSLMALTVATGFVVDDAIVVLENISRHIENGLKPKQAALKGVSEVGFTVLSMSISLVAVFIPLLLMDGLVGRLFKEFAITLTTAIGISLFVSLTLTPMMCAHLLKGIKPKAQSHLRGFGKLIFRLQQGYSVTLQAALRHKRWIMAIFITTLGLNAYLYISAPKTFFPDQDTGRLMGFVRADQSISFQSMKEKMTRFMQEINADKDVDSVTGFTGGGRINSGFMFISLNPLSERTDSANQVINRLRIKLANEPGATLFLMPVQDVRAGGRQANASYQFTLLADDLSELRKWEPLIRKALGELPELVDVNSDKEDKGAEMALTYDRDTMSQLGINVSDANNLLNNAFGQRQISTIYAPLNQYKVVMEVSEQYTQDVSALDKMYVMNTQGERIPLSAFASWYPANAPLSVNHQGLSAASTIAFNVPEGYTLSDAINAIERTMTELGVPNTVRGTFAGTAQIFQETIKSQLILILAAIVTVYIVLGVLYESYIHPLTILSTLPSAGVGALLALRLFDTPFSLIALIGIMLLIGIVKKNAIIMVDFAITAQREGKLSAQEAIIQASLLRFRPIIMTTLAALFGALPLMLSSGDGAELRQPLGITIVGGLLMSQLLTLYTTPIIYLFFDGVRQRWQQRRHNKKEANA</sequence>
<dbReference type="EMBL" id="AM942759">
    <property type="protein sequence ID" value="CAR43321.1"/>
    <property type="molecule type" value="Genomic_DNA"/>
</dbReference>
<dbReference type="RefSeq" id="WP_004243447.1">
    <property type="nucleotide sequence ID" value="NC_010554.1"/>
</dbReference>
<dbReference type="SMR" id="B4EYA1"/>
<dbReference type="EnsemblBacteria" id="CAR43321">
    <property type="protein sequence ID" value="CAR43321"/>
    <property type="gene ID" value="PMI1587"/>
</dbReference>
<dbReference type="GeneID" id="6802165"/>
<dbReference type="KEGG" id="pmr:PMI1587"/>
<dbReference type="eggNOG" id="COG0841">
    <property type="taxonomic scope" value="Bacteria"/>
</dbReference>
<dbReference type="HOGENOM" id="CLU_002755_1_2_6"/>
<dbReference type="Proteomes" id="UP000008319">
    <property type="component" value="Chromosome"/>
</dbReference>
<dbReference type="GO" id="GO:0005886">
    <property type="term" value="C:plasma membrane"/>
    <property type="evidence" value="ECO:0007669"/>
    <property type="project" value="UniProtKB-SubCell"/>
</dbReference>
<dbReference type="GO" id="GO:0042910">
    <property type="term" value="F:xenobiotic transmembrane transporter activity"/>
    <property type="evidence" value="ECO:0007669"/>
    <property type="project" value="TreeGrafter"/>
</dbReference>
<dbReference type="FunFam" id="1.20.1640.10:FF:000001">
    <property type="entry name" value="Efflux pump membrane transporter"/>
    <property type="match status" value="1"/>
</dbReference>
<dbReference type="FunFam" id="3.30.70.1430:FF:000001">
    <property type="entry name" value="Efflux pump membrane transporter"/>
    <property type="match status" value="1"/>
</dbReference>
<dbReference type="Gene3D" id="3.30.70.1430">
    <property type="entry name" value="Multidrug efflux transporter AcrB pore domain"/>
    <property type="match status" value="2"/>
</dbReference>
<dbReference type="Gene3D" id="3.30.70.1440">
    <property type="entry name" value="Multidrug efflux transporter AcrB pore domain"/>
    <property type="match status" value="1"/>
</dbReference>
<dbReference type="Gene3D" id="3.30.70.1320">
    <property type="entry name" value="Multidrug efflux transporter AcrB pore domain like"/>
    <property type="match status" value="1"/>
</dbReference>
<dbReference type="Gene3D" id="3.30.2090.10">
    <property type="entry name" value="Multidrug efflux transporter AcrB TolC docking domain, DN and DC subdomains"/>
    <property type="match status" value="2"/>
</dbReference>
<dbReference type="Gene3D" id="1.20.1640.10">
    <property type="entry name" value="Multidrug efflux transporter AcrB transmembrane domain"/>
    <property type="match status" value="2"/>
</dbReference>
<dbReference type="HAMAP" id="MF_01424">
    <property type="entry name" value="MdtC"/>
    <property type="match status" value="1"/>
</dbReference>
<dbReference type="InterPro" id="IPR027463">
    <property type="entry name" value="AcrB_DN_DC_subdom"/>
</dbReference>
<dbReference type="InterPro" id="IPR001036">
    <property type="entry name" value="Acrflvin-R"/>
</dbReference>
<dbReference type="InterPro" id="IPR023931">
    <property type="entry name" value="Multidrug-R_MdtC"/>
</dbReference>
<dbReference type="NCBIfam" id="NF007905">
    <property type="entry name" value="PRK10614.1"/>
    <property type="match status" value="1"/>
</dbReference>
<dbReference type="NCBIfam" id="NF033617">
    <property type="entry name" value="RND_permease_2"/>
    <property type="match status" value="1"/>
</dbReference>
<dbReference type="PANTHER" id="PTHR32063">
    <property type="match status" value="1"/>
</dbReference>
<dbReference type="PANTHER" id="PTHR32063:SF34">
    <property type="entry name" value="MULTIDRUG RESISTANCE PROTEIN MDTC"/>
    <property type="match status" value="1"/>
</dbReference>
<dbReference type="Pfam" id="PF00873">
    <property type="entry name" value="ACR_tran"/>
    <property type="match status" value="1"/>
</dbReference>
<dbReference type="PRINTS" id="PR00702">
    <property type="entry name" value="ACRIFLAVINRP"/>
</dbReference>
<dbReference type="SUPFAM" id="SSF82693">
    <property type="entry name" value="Multidrug efflux transporter AcrB pore domain, PN1, PN2, PC1 and PC2 subdomains"/>
    <property type="match status" value="4"/>
</dbReference>
<dbReference type="SUPFAM" id="SSF82714">
    <property type="entry name" value="Multidrug efflux transporter AcrB TolC docking domain, DN and DC subdomains"/>
    <property type="match status" value="2"/>
</dbReference>
<dbReference type="SUPFAM" id="SSF82866">
    <property type="entry name" value="Multidrug efflux transporter AcrB transmembrane domain"/>
    <property type="match status" value="2"/>
</dbReference>
<gene>
    <name evidence="1" type="primary">mdtC</name>
    <name type="ordered locus">PMI1587</name>
</gene>
<accession>B4EYA1</accession>
<keyword id="KW-0997">Cell inner membrane</keyword>
<keyword id="KW-1003">Cell membrane</keyword>
<keyword id="KW-0472">Membrane</keyword>
<keyword id="KW-1185">Reference proteome</keyword>
<keyword id="KW-0812">Transmembrane</keyword>
<keyword id="KW-1133">Transmembrane helix</keyword>
<keyword id="KW-0813">Transport</keyword>
<comment type="subunit">
    <text evidence="1">Part of a tripartite efflux system composed of MdtA, MdtB and MdtC. MdtC forms a heteromultimer with MdtB.</text>
</comment>
<comment type="subcellular location">
    <subcellularLocation>
        <location evidence="1">Cell inner membrane</location>
        <topology evidence="1">Multi-pass membrane protein</topology>
    </subcellularLocation>
</comment>
<comment type="similarity">
    <text evidence="1">Belongs to the resistance-nodulation-cell division (RND) (TC 2.A.6) family. MdtC subfamily.</text>
</comment>
<proteinExistence type="inferred from homology"/>
<protein>
    <recommendedName>
        <fullName evidence="1">Multidrug resistance protein MdtC</fullName>
    </recommendedName>
    <alternativeName>
        <fullName evidence="1">Multidrug transporter MdtC</fullName>
    </alternativeName>
</protein>
<feature type="chain" id="PRO_0000414036" description="Multidrug resistance protein MdtC">
    <location>
        <begin position="1"/>
        <end position="1027"/>
    </location>
</feature>
<feature type="transmembrane region" description="Helical" evidence="1">
    <location>
        <begin position="16"/>
        <end position="36"/>
    </location>
</feature>
<feature type="transmembrane region" description="Helical" evidence="1">
    <location>
        <begin position="333"/>
        <end position="353"/>
    </location>
</feature>
<feature type="transmembrane region" description="Helical" evidence="1">
    <location>
        <begin position="360"/>
        <end position="380"/>
    </location>
</feature>
<feature type="transmembrane region" description="Helical" evidence="1">
    <location>
        <begin position="387"/>
        <end position="407"/>
    </location>
</feature>
<feature type="transmembrane region" description="Helical" evidence="1">
    <location>
        <begin position="431"/>
        <end position="451"/>
    </location>
</feature>
<feature type="transmembrane region" description="Helical" evidence="1">
    <location>
        <begin position="463"/>
        <end position="483"/>
    </location>
</feature>
<feature type="transmembrane region" description="Helical" evidence="1">
    <location>
        <begin position="528"/>
        <end position="548"/>
    </location>
</feature>
<feature type="transmembrane region" description="Helical" evidence="1">
    <location>
        <begin position="853"/>
        <end position="873"/>
    </location>
</feature>
<feature type="transmembrane region" description="Helical" evidence="1">
    <location>
        <begin position="875"/>
        <end position="895"/>
    </location>
</feature>
<feature type="transmembrane region" description="Helical" evidence="1">
    <location>
        <begin position="897"/>
        <end position="917"/>
    </location>
</feature>
<feature type="transmembrane region" description="Helical" evidence="1">
    <location>
        <begin position="953"/>
        <end position="973"/>
    </location>
</feature>
<feature type="transmembrane region" description="Helical" evidence="1">
    <location>
        <begin position="984"/>
        <end position="1004"/>
    </location>
</feature>
<reference key="1">
    <citation type="journal article" date="2008" name="J. Bacteriol.">
        <title>Complete genome sequence of uropathogenic Proteus mirabilis, a master of both adherence and motility.</title>
        <authorList>
            <person name="Pearson M.M."/>
            <person name="Sebaihia M."/>
            <person name="Churcher C."/>
            <person name="Quail M.A."/>
            <person name="Seshasayee A.S."/>
            <person name="Luscombe N.M."/>
            <person name="Abdellah Z."/>
            <person name="Arrosmith C."/>
            <person name="Atkin B."/>
            <person name="Chillingworth T."/>
            <person name="Hauser H."/>
            <person name="Jagels K."/>
            <person name="Moule S."/>
            <person name="Mungall K."/>
            <person name="Norbertczak H."/>
            <person name="Rabbinowitsch E."/>
            <person name="Walker D."/>
            <person name="Whithead S."/>
            <person name="Thomson N.R."/>
            <person name="Rather P.N."/>
            <person name="Parkhill J."/>
            <person name="Mobley H.L.T."/>
        </authorList>
    </citation>
    <scope>NUCLEOTIDE SEQUENCE [LARGE SCALE GENOMIC DNA]</scope>
    <source>
        <strain>HI4320</strain>
    </source>
</reference>
<organism>
    <name type="scientific">Proteus mirabilis (strain HI4320)</name>
    <dbReference type="NCBI Taxonomy" id="529507"/>
    <lineage>
        <taxon>Bacteria</taxon>
        <taxon>Pseudomonadati</taxon>
        <taxon>Pseudomonadota</taxon>
        <taxon>Gammaproteobacteria</taxon>
        <taxon>Enterobacterales</taxon>
        <taxon>Morganellaceae</taxon>
        <taxon>Proteus</taxon>
    </lineage>
</organism>
<evidence type="ECO:0000255" key="1">
    <source>
        <dbReference type="HAMAP-Rule" id="MF_01424"/>
    </source>
</evidence>